<gene>
    <name type="primary">HINT3</name>
</gene>
<evidence type="ECO:0000250" key="1">
    <source>
        <dbReference type="UniProtKB" id="P49773"/>
    </source>
</evidence>
<evidence type="ECO:0000250" key="2">
    <source>
        <dbReference type="UniProtKB" id="Q9CPS6"/>
    </source>
</evidence>
<evidence type="ECO:0000255" key="3">
    <source>
        <dbReference type="PROSITE-ProRule" id="PRU00464"/>
    </source>
</evidence>
<evidence type="ECO:0000256" key="4">
    <source>
        <dbReference type="SAM" id="MobiDB-lite"/>
    </source>
</evidence>
<evidence type="ECO:0000269" key="5">
    <source>
    </source>
</evidence>
<evidence type="ECO:0000269" key="6">
    <source>
    </source>
</evidence>
<evidence type="ECO:0000269" key="7">
    <source ref="1"/>
</evidence>
<evidence type="ECO:0000305" key="8"/>
<evidence type="ECO:0000305" key="9">
    <source>
    </source>
</evidence>
<evidence type="ECO:0007744" key="10">
    <source>
    </source>
</evidence>
<evidence type="ECO:0007744" key="11">
    <source>
    </source>
</evidence>
<feature type="initiator methionine" description="Removed" evidence="10 11">
    <location>
        <position position="1"/>
    </location>
</feature>
<feature type="chain" id="PRO_0000324327" description="Adenosine 5'-monophosphoramidase HINT3">
    <location>
        <begin position="2"/>
        <end position="182"/>
    </location>
</feature>
<feature type="domain" description="HIT" evidence="3">
    <location>
        <begin position="49"/>
        <end position="160"/>
    </location>
</feature>
<feature type="region of interest" description="Disordered" evidence="4">
    <location>
        <begin position="1"/>
        <end position="42"/>
    </location>
</feature>
<feature type="short sequence motif" description="Histidine triad motif">
    <location>
        <begin position="143"/>
        <end position="147"/>
    </location>
</feature>
<feature type="compositionally biased region" description="Polar residues" evidence="4">
    <location>
        <begin position="21"/>
        <end position="30"/>
    </location>
</feature>
<feature type="active site" description="Tele-AMP-histidine intermediate" evidence="6">
    <location>
        <position position="145"/>
    </location>
</feature>
<feature type="binding site" evidence="1">
    <location>
        <begin position="76"/>
        <end position="77"/>
    </location>
    <ligand>
        <name>AMP</name>
        <dbReference type="ChEBI" id="CHEBI:456215"/>
    </ligand>
</feature>
<feature type="binding site" evidence="1">
    <location>
        <begin position="145"/>
        <end position="147"/>
    </location>
    <ligand>
        <name>AMP</name>
        <dbReference type="ChEBI" id="CHEBI:456215"/>
    </ligand>
</feature>
<feature type="modified residue" description="N-acetylalanine" evidence="10 11">
    <location>
        <position position="2"/>
    </location>
</feature>
<feature type="sequence variant" id="VAR_039734" description="2.5-fold increase in affinity for indolepropinoic acyl-adenylate and cytosine; 2-fold decrease in hypoxanthine affinity; nearly no change in affinity for adenine, guanine and uracil; dbSNP:rs2295005." evidence="5 6 7">
    <original>G</original>
    <variation>A</variation>
    <location>
        <position position="36"/>
    </location>
</feature>
<feature type="mutagenesis site" description="Abolishes adenosine 5'-monophosphoramidase activity." evidence="6">
    <original>H</original>
    <variation>A</variation>
    <location>
        <position position="145"/>
    </location>
</feature>
<organism>
    <name type="scientific">Homo sapiens</name>
    <name type="common">Human</name>
    <dbReference type="NCBI Taxonomy" id="9606"/>
    <lineage>
        <taxon>Eukaryota</taxon>
        <taxon>Metazoa</taxon>
        <taxon>Chordata</taxon>
        <taxon>Craniata</taxon>
        <taxon>Vertebrata</taxon>
        <taxon>Euteleostomi</taxon>
        <taxon>Mammalia</taxon>
        <taxon>Eutheria</taxon>
        <taxon>Euarchontoglires</taxon>
        <taxon>Primates</taxon>
        <taxon>Haplorrhini</taxon>
        <taxon>Catarrhini</taxon>
        <taxon>Hominidae</taxon>
        <taxon>Homo</taxon>
    </lineage>
</organism>
<reference key="1">
    <citation type="submission" date="2001-05" db="EMBL/GenBank/DDBJ databases">
        <title>Human HINT-4 is a novel member of the histidine triad protein family with differential polyadenylation.</title>
        <authorList>
            <person name="Huang C.-H."/>
        </authorList>
    </citation>
    <scope>NUCLEOTIDE SEQUENCE [MRNA]</scope>
    <scope>VARIANT ALA-36</scope>
</reference>
<reference key="2">
    <citation type="submission" date="2003-11" db="EMBL/GenBank/DDBJ databases">
        <title>HINT-3-2, a novel member of HIT family, and Hint3-1 with phosphoramidase activity.</title>
        <authorList>
            <person name="Cheng J.L."/>
            <person name="Liu B.L."/>
            <person name="Chou T.F."/>
            <person name="Drontle D."/>
            <person name="Wagner C.R."/>
        </authorList>
    </citation>
    <scope>NUCLEOTIDE SEQUENCE [MRNA]</scope>
</reference>
<reference key="3">
    <citation type="journal article" date="2004" name="Nat. Genet.">
        <title>Complete sequencing and characterization of 21,243 full-length human cDNAs.</title>
        <authorList>
            <person name="Ota T."/>
            <person name="Suzuki Y."/>
            <person name="Nishikawa T."/>
            <person name="Otsuki T."/>
            <person name="Sugiyama T."/>
            <person name="Irie R."/>
            <person name="Wakamatsu A."/>
            <person name="Hayashi K."/>
            <person name="Sato H."/>
            <person name="Nagai K."/>
            <person name="Kimura K."/>
            <person name="Makita H."/>
            <person name="Sekine M."/>
            <person name="Obayashi M."/>
            <person name="Nishi T."/>
            <person name="Shibahara T."/>
            <person name="Tanaka T."/>
            <person name="Ishii S."/>
            <person name="Yamamoto J."/>
            <person name="Saito K."/>
            <person name="Kawai Y."/>
            <person name="Isono Y."/>
            <person name="Nakamura Y."/>
            <person name="Nagahari K."/>
            <person name="Murakami K."/>
            <person name="Yasuda T."/>
            <person name="Iwayanagi T."/>
            <person name="Wagatsuma M."/>
            <person name="Shiratori A."/>
            <person name="Sudo H."/>
            <person name="Hosoiri T."/>
            <person name="Kaku Y."/>
            <person name="Kodaira H."/>
            <person name="Kondo H."/>
            <person name="Sugawara M."/>
            <person name="Takahashi M."/>
            <person name="Kanda K."/>
            <person name="Yokoi T."/>
            <person name="Furuya T."/>
            <person name="Kikkawa E."/>
            <person name="Omura Y."/>
            <person name="Abe K."/>
            <person name="Kamihara K."/>
            <person name="Katsuta N."/>
            <person name="Sato K."/>
            <person name="Tanikawa M."/>
            <person name="Yamazaki M."/>
            <person name="Ninomiya K."/>
            <person name="Ishibashi T."/>
            <person name="Yamashita H."/>
            <person name="Murakawa K."/>
            <person name="Fujimori K."/>
            <person name="Tanai H."/>
            <person name="Kimata M."/>
            <person name="Watanabe M."/>
            <person name="Hiraoka S."/>
            <person name="Chiba Y."/>
            <person name="Ishida S."/>
            <person name="Ono Y."/>
            <person name="Takiguchi S."/>
            <person name="Watanabe S."/>
            <person name="Yosida M."/>
            <person name="Hotuta T."/>
            <person name="Kusano J."/>
            <person name="Kanehori K."/>
            <person name="Takahashi-Fujii A."/>
            <person name="Hara H."/>
            <person name="Tanase T.-O."/>
            <person name="Nomura Y."/>
            <person name="Togiya S."/>
            <person name="Komai F."/>
            <person name="Hara R."/>
            <person name="Takeuchi K."/>
            <person name="Arita M."/>
            <person name="Imose N."/>
            <person name="Musashino K."/>
            <person name="Yuuki H."/>
            <person name="Oshima A."/>
            <person name="Sasaki N."/>
            <person name="Aotsuka S."/>
            <person name="Yoshikawa Y."/>
            <person name="Matsunawa H."/>
            <person name="Ichihara T."/>
            <person name="Shiohata N."/>
            <person name="Sano S."/>
            <person name="Moriya S."/>
            <person name="Momiyama H."/>
            <person name="Satoh N."/>
            <person name="Takami S."/>
            <person name="Terashima Y."/>
            <person name="Suzuki O."/>
            <person name="Nakagawa S."/>
            <person name="Senoh A."/>
            <person name="Mizoguchi H."/>
            <person name="Goto Y."/>
            <person name="Shimizu F."/>
            <person name="Wakebe H."/>
            <person name="Hishigaki H."/>
            <person name="Watanabe T."/>
            <person name="Sugiyama A."/>
            <person name="Takemoto M."/>
            <person name="Kawakami B."/>
            <person name="Yamazaki M."/>
            <person name="Watanabe K."/>
            <person name="Kumagai A."/>
            <person name="Itakura S."/>
            <person name="Fukuzumi Y."/>
            <person name="Fujimori Y."/>
            <person name="Komiyama M."/>
            <person name="Tashiro H."/>
            <person name="Tanigami A."/>
            <person name="Fujiwara T."/>
            <person name="Ono T."/>
            <person name="Yamada K."/>
            <person name="Fujii Y."/>
            <person name="Ozaki K."/>
            <person name="Hirao M."/>
            <person name="Ohmori Y."/>
            <person name="Kawabata A."/>
            <person name="Hikiji T."/>
            <person name="Kobatake N."/>
            <person name="Inagaki H."/>
            <person name="Ikema Y."/>
            <person name="Okamoto S."/>
            <person name="Okitani R."/>
            <person name="Kawakami T."/>
            <person name="Noguchi S."/>
            <person name="Itoh T."/>
            <person name="Shigeta K."/>
            <person name="Senba T."/>
            <person name="Matsumura K."/>
            <person name="Nakajima Y."/>
            <person name="Mizuno T."/>
            <person name="Morinaga M."/>
            <person name="Sasaki M."/>
            <person name="Togashi T."/>
            <person name="Oyama M."/>
            <person name="Hata H."/>
            <person name="Watanabe M."/>
            <person name="Komatsu T."/>
            <person name="Mizushima-Sugano J."/>
            <person name="Satoh T."/>
            <person name="Shirai Y."/>
            <person name="Takahashi Y."/>
            <person name="Nakagawa K."/>
            <person name="Okumura K."/>
            <person name="Nagase T."/>
            <person name="Nomura N."/>
            <person name="Kikuchi H."/>
            <person name="Masuho Y."/>
            <person name="Yamashita R."/>
            <person name="Nakai K."/>
            <person name="Yada T."/>
            <person name="Nakamura Y."/>
            <person name="Ohara O."/>
            <person name="Isogai T."/>
            <person name="Sugano S."/>
        </authorList>
    </citation>
    <scope>NUCLEOTIDE SEQUENCE [LARGE SCALE MRNA]</scope>
    <scope>VARIANT ALA-36</scope>
    <source>
        <tissue>Trachea</tissue>
    </source>
</reference>
<reference key="4">
    <citation type="journal article" date="2003" name="Nature">
        <title>The DNA sequence and analysis of human chromosome 6.</title>
        <authorList>
            <person name="Mungall A.J."/>
            <person name="Palmer S.A."/>
            <person name="Sims S.K."/>
            <person name="Edwards C.A."/>
            <person name="Ashurst J.L."/>
            <person name="Wilming L."/>
            <person name="Jones M.C."/>
            <person name="Horton R."/>
            <person name="Hunt S.E."/>
            <person name="Scott C.E."/>
            <person name="Gilbert J.G.R."/>
            <person name="Clamp M.E."/>
            <person name="Bethel G."/>
            <person name="Milne S."/>
            <person name="Ainscough R."/>
            <person name="Almeida J.P."/>
            <person name="Ambrose K.D."/>
            <person name="Andrews T.D."/>
            <person name="Ashwell R.I.S."/>
            <person name="Babbage A.K."/>
            <person name="Bagguley C.L."/>
            <person name="Bailey J."/>
            <person name="Banerjee R."/>
            <person name="Barker D.J."/>
            <person name="Barlow K.F."/>
            <person name="Bates K."/>
            <person name="Beare D.M."/>
            <person name="Beasley H."/>
            <person name="Beasley O."/>
            <person name="Bird C.P."/>
            <person name="Blakey S.E."/>
            <person name="Bray-Allen S."/>
            <person name="Brook J."/>
            <person name="Brown A.J."/>
            <person name="Brown J.Y."/>
            <person name="Burford D.C."/>
            <person name="Burrill W."/>
            <person name="Burton J."/>
            <person name="Carder C."/>
            <person name="Carter N.P."/>
            <person name="Chapman J.C."/>
            <person name="Clark S.Y."/>
            <person name="Clark G."/>
            <person name="Clee C.M."/>
            <person name="Clegg S."/>
            <person name="Cobley V."/>
            <person name="Collier R.E."/>
            <person name="Collins J.E."/>
            <person name="Colman L.K."/>
            <person name="Corby N.R."/>
            <person name="Coville G.J."/>
            <person name="Culley K.M."/>
            <person name="Dhami P."/>
            <person name="Davies J."/>
            <person name="Dunn M."/>
            <person name="Earthrowl M.E."/>
            <person name="Ellington A.E."/>
            <person name="Evans K.A."/>
            <person name="Faulkner L."/>
            <person name="Francis M.D."/>
            <person name="Frankish A."/>
            <person name="Frankland J."/>
            <person name="French L."/>
            <person name="Garner P."/>
            <person name="Garnett J."/>
            <person name="Ghori M.J."/>
            <person name="Gilby L.M."/>
            <person name="Gillson C.J."/>
            <person name="Glithero R.J."/>
            <person name="Grafham D.V."/>
            <person name="Grant M."/>
            <person name="Gribble S."/>
            <person name="Griffiths C."/>
            <person name="Griffiths M.N.D."/>
            <person name="Hall R."/>
            <person name="Halls K.S."/>
            <person name="Hammond S."/>
            <person name="Harley J.L."/>
            <person name="Hart E.A."/>
            <person name="Heath P.D."/>
            <person name="Heathcott R."/>
            <person name="Holmes S.J."/>
            <person name="Howden P.J."/>
            <person name="Howe K.L."/>
            <person name="Howell G.R."/>
            <person name="Huckle E."/>
            <person name="Humphray S.J."/>
            <person name="Humphries M.D."/>
            <person name="Hunt A.R."/>
            <person name="Johnson C.M."/>
            <person name="Joy A.A."/>
            <person name="Kay M."/>
            <person name="Keenan S.J."/>
            <person name="Kimberley A.M."/>
            <person name="King A."/>
            <person name="Laird G.K."/>
            <person name="Langford C."/>
            <person name="Lawlor S."/>
            <person name="Leongamornlert D.A."/>
            <person name="Leversha M."/>
            <person name="Lloyd C.R."/>
            <person name="Lloyd D.M."/>
            <person name="Loveland J.E."/>
            <person name="Lovell J."/>
            <person name="Martin S."/>
            <person name="Mashreghi-Mohammadi M."/>
            <person name="Maslen G.L."/>
            <person name="Matthews L."/>
            <person name="McCann O.T."/>
            <person name="McLaren S.J."/>
            <person name="McLay K."/>
            <person name="McMurray A."/>
            <person name="Moore M.J.F."/>
            <person name="Mullikin J.C."/>
            <person name="Niblett D."/>
            <person name="Nickerson T."/>
            <person name="Novik K.L."/>
            <person name="Oliver K."/>
            <person name="Overton-Larty E.K."/>
            <person name="Parker A."/>
            <person name="Patel R."/>
            <person name="Pearce A.V."/>
            <person name="Peck A.I."/>
            <person name="Phillimore B.J.C.T."/>
            <person name="Phillips S."/>
            <person name="Plumb R.W."/>
            <person name="Porter K.M."/>
            <person name="Ramsey Y."/>
            <person name="Ranby S.A."/>
            <person name="Rice C.M."/>
            <person name="Ross M.T."/>
            <person name="Searle S.M."/>
            <person name="Sehra H.K."/>
            <person name="Sheridan E."/>
            <person name="Skuce C.D."/>
            <person name="Smith S."/>
            <person name="Smith M."/>
            <person name="Spraggon L."/>
            <person name="Squares S.L."/>
            <person name="Steward C.A."/>
            <person name="Sycamore N."/>
            <person name="Tamlyn-Hall G."/>
            <person name="Tester J."/>
            <person name="Theaker A.J."/>
            <person name="Thomas D.W."/>
            <person name="Thorpe A."/>
            <person name="Tracey A."/>
            <person name="Tromans A."/>
            <person name="Tubby B."/>
            <person name="Wall M."/>
            <person name="Wallis J.M."/>
            <person name="West A.P."/>
            <person name="White S.S."/>
            <person name="Whitehead S.L."/>
            <person name="Whittaker H."/>
            <person name="Wild A."/>
            <person name="Willey D.J."/>
            <person name="Wilmer T.E."/>
            <person name="Wood J.M."/>
            <person name="Wray P.W."/>
            <person name="Wyatt J.C."/>
            <person name="Young L."/>
            <person name="Younger R.M."/>
            <person name="Bentley D.R."/>
            <person name="Coulson A."/>
            <person name="Durbin R.M."/>
            <person name="Hubbard T."/>
            <person name="Sulston J.E."/>
            <person name="Dunham I."/>
            <person name="Rogers J."/>
            <person name="Beck S."/>
        </authorList>
    </citation>
    <scope>NUCLEOTIDE SEQUENCE [LARGE SCALE GENOMIC DNA]</scope>
</reference>
<reference key="5">
    <citation type="submission" date="2005-09" db="EMBL/GenBank/DDBJ databases">
        <authorList>
            <person name="Mural R.J."/>
            <person name="Istrail S."/>
            <person name="Sutton G.G."/>
            <person name="Florea L."/>
            <person name="Halpern A.L."/>
            <person name="Mobarry C.M."/>
            <person name="Lippert R."/>
            <person name="Walenz B."/>
            <person name="Shatkay H."/>
            <person name="Dew I."/>
            <person name="Miller J.R."/>
            <person name="Flanigan M.J."/>
            <person name="Edwards N.J."/>
            <person name="Bolanos R."/>
            <person name="Fasulo D."/>
            <person name="Halldorsson B.V."/>
            <person name="Hannenhalli S."/>
            <person name="Turner R."/>
            <person name="Yooseph S."/>
            <person name="Lu F."/>
            <person name="Nusskern D.R."/>
            <person name="Shue B.C."/>
            <person name="Zheng X.H."/>
            <person name="Zhong F."/>
            <person name="Delcher A.L."/>
            <person name="Huson D.H."/>
            <person name="Kravitz S.A."/>
            <person name="Mouchard L."/>
            <person name="Reinert K."/>
            <person name="Remington K.A."/>
            <person name="Clark A.G."/>
            <person name="Waterman M.S."/>
            <person name="Eichler E.E."/>
            <person name="Adams M.D."/>
            <person name="Hunkapiller M.W."/>
            <person name="Myers E.W."/>
            <person name="Venter J.C."/>
        </authorList>
    </citation>
    <scope>NUCLEOTIDE SEQUENCE [LARGE SCALE GENOMIC DNA]</scope>
</reference>
<reference key="6">
    <citation type="journal article" date="2004" name="Genome Res.">
        <title>The status, quality, and expansion of the NIH full-length cDNA project: the Mammalian Gene Collection (MGC).</title>
        <authorList>
            <consortium name="The MGC Project Team"/>
        </authorList>
    </citation>
    <scope>NUCLEOTIDE SEQUENCE [LARGE SCALE MRNA]</scope>
    <source>
        <tissue>Eye</tissue>
    </source>
</reference>
<reference key="7">
    <citation type="journal article" date="2002" name="Biochemistry">
        <title>Hint, Fhit, and GalT: function, structure, evolution, and mechanism of three branches of the histidine triad superfamily of nucleotide hydrolases and transferases.</title>
        <authorList>
            <person name="Brenner C."/>
        </authorList>
    </citation>
    <scope>GENE FAMILY</scope>
</reference>
<reference key="8">
    <citation type="journal article" date="2007" name="J. Mol. Biol.">
        <title>Evidence that human histidine triad nucleotide binding protein 3 (Hint3) is a distinct branch of the histidine triad (HIT) superfamily.</title>
        <authorList>
            <person name="Chou T.-F."/>
            <person name="Cheng J."/>
            <person name="Tikh I.B."/>
            <person name="Wagner C.R."/>
        </authorList>
    </citation>
    <scope>FUNCTION</scope>
    <scope>SUBCELLULAR LOCATION</scope>
    <scope>BIOPHYSICOCHEMICAL PROPERTIES</scope>
    <scope>VARIANT ALA-36</scope>
    <scope>ACTIVE SITE</scope>
    <scope>MUTAGENESIS OF HIS-145</scope>
    <scope>CATALYTIC ACTIVITY</scope>
    <scope>SUBUNIT</scope>
</reference>
<reference key="9">
    <citation type="journal article" date="2008" name="Proc. Natl. Acad. Sci. U.S.A.">
        <title>A quantitative atlas of mitotic phosphorylation.</title>
        <authorList>
            <person name="Dephoure N."/>
            <person name="Zhou C."/>
            <person name="Villen J."/>
            <person name="Beausoleil S.A."/>
            <person name="Bakalarski C.E."/>
            <person name="Elledge S.J."/>
            <person name="Gygi S.P."/>
        </authorList>
    </citation>
    <scope>IDENTIFICATION BY MASS SPECTROMETRY [LARGE SCALE ANALYSIS]</scope>
    <source>
        <tissue>Cervix carcinoma</tissue>
    </source>
</reference>
<reference key="10">
    <citation type="journal article" date="2009" name="Anal. Chem.">
        <title>Lys-N and trypsin cover complementary parts of the phosphoproteome in a refined SCX-based approach.</title>
        <authorList>
            <person name="Gauci S."/>
            <person name="Helbig A.O."/>
            <person name="Slijper M."/>
            <person name="Krijgsveld J."/>
            <person name="Heck A.J."/>
            <person name="Mohammed S."/>
        </authorList>
    </citation>
    <scope>ACETYLATION [LARGE SCALE ANALYSIS] AT ALA-2</scope>
    <scope>CLEAVAGE OF INITIATOR METHIONINE [LARGE SCALE ANALYSIS]</scope>
    <scope>IDENTIFICATION BY MASS SPECTROMETRY [LARGE SCALE ANALYSIS]</scope>
</reference>
<reference key="11">
    <citation type="journal article" date="2011" name="BMC Syst. Biol.">
        <title>Initial characterization of the human central proteome.</title>
        <authorList>
            <person name="Burkard T.R."/>
            <person name="Planyavsky M."/>
            <person name="Kaupe I."/>
            <person name="Breitwieser F.P."/>
            <person name="Buerckstuemmer T."/>
            <person name="Bennett K.L."/>
            <person name="Superti-Furga G."/>
            <person name="Colinge J."/>
        </authorList>
    </citation>
    <scope>IDENTIFICATION BY MASS SPECTROMETRY [LARGE SCALE ANALYSIS]</scope>
</reference>
<reference key="12">
    <citation type="journal article" date="2012" name="Proc. Natl. Acad. Sci. U.S.A.">
        <title>N-terminal acetylome analyses and functional insights of the N-terminal acetyltransferase NatB.</title>
        <authorList>
            <person name="Van Damme P."/>
            <person name="Lasa M."/>
            <person name="Polevoda B."/>
            <person name="Gazquez C."/>
            <person name="Elosegui-Artola A."/>
            <person name="Kim D.S."/>
            <person name="De Juan-Pardo E."/>
            <person name="Demeyer K."/>
            <person name="Hole K."/>
            <person name="Larrea E."/>
            <person name="Timmerman E."/>
            <person name="Prieto J."/>
            <person name="Arnesen T."/>
            <person name="Sherman F."/>
            <person name="Gevaert K."/>
            <person name="Aldabe R."/>
        </authorList>
    </citation>
    <scope>ACETYLATION [LARGE SCALE ANALYSIS] AT ALA-2</scope>
    <scope>CLEAVAGE OF INITIATOR METHIONINE [LARGE SCALE ANALYSIS]</scope>
    <scope>IDENTIFICATION BY MASS SPECTROMETRY [LARGE SCALE ANALYSIS]</scope>
</reference>
<name>HINT3_HUMAN</name>
<dbReference type="EC" id="3.9.1.-" evidence="6"/>
<dbReference type="EMBL" id="AY035387">
    <property type="protein sequence ID" value="AAK71347.1"/>
    <property type="molecule type" value="mRNA"/>
</dbReference>
<dbReference type="EMBL" id="AY035388">
    <property type="protein sequence ID" value="AAK71348.1"/>
    <property type="molecule type" value="mRNA"/>
</dbReference>
<dbReference type="EMBL" id="AY486460">
    <property type="protein sequence ID" value="AAR89533.1"/>
    <property type="molecule type" value="mRNA"/>
</dbReference>
<dbReference type="EMBL" id="AY486461">
    <property type="protein sequence ID" value="AAR89534.1"/>
    <property type="molecule type" value="mRNA"/>
</dbReference>
<dbReference type="EMBL" id="AK057688">
    <property type="protein sequence ID" value="BAG51953.1"/>
    <property type="molecule type" value="mRNA"/>
</dbReference>
<dbReference type="EMBL" id="AL035689">
    <property type="status" value="NOT_ANNOTATED_CDS"/>
    <property type="molecule type" value="Genomic_DNA"/>
</dbReference>
<dbReference type="EMBL" id="CH471051">
    <property type="protein sequence ID" value="EAW48129.1"/>
    <property type="molecule type" value="Genomic_DNA"/>
</dbReference>
<dbReference type="EMBL" id="BC015732">
    <property type="protein sequence ID" value="AAH15732.1"/>
    <property type="molecule type" value="mRNA"/>
</dbReference>
<dbReference type="CCDS" id="CCDS5133.1"/>
<dbReference type="RefSeq" id="NP_612638.3">
    <property type="nucleotide sequence ID" value="NM_138571.4"/>
</dbReference>
<dbReference type="SMR" id="Q9NQE9"/>
<dbReference type="BioGRID" id="126420">
    <property type="interactions" value="30"/>
</dbReference>
<dbReference type="FunCoup" id="Q9NQE9">
    <property type="interactions" value="2324"/>
</dbReference>
<dbReference type="IntAct" id="Q9NQE9">
    <property type="interactions" value="24"/>
</dbReference>
<dbReference type="STRING" id="9606.ENSP00000229633"/>
<dbReference type="GlyGen" id="Q9NQE9">
    <property type="glycosylation" value="1 site, 1 O-linked glycan (1 site)"/>
</dbReference>
<dbReference type="iPTMnet" id="Q9NQE9"/>
<dbReference type="PhosphoSitePlus" id="Q9NQE9"/>
<dbReference type="SwissPalm" id="Q9NQE9"/>
<dbReference type="BioMuta" id="HINT3"/>
<dbReference type="DMDM" id="74752900"/>
<dbReference type="jPOST" id="Q9NQE9"/>
<dbReference type="MassIVE" id="Q9NQE9"/>
<dbReference type="PaxDb" id="9606-ENSP00000229633"/>
<dbReference type="PeptideAtlas" id="Q9NQE9"/>
<dbReference type="ProteomicsDB" id="82145"/>
<dbReference type="Pumba" id="Q9NQE9"/>
<dbReference type="Antibodypedia" id="32730">
    <property type="antibodies" value="74 antibodies from 18 providers"/>
</dbReference>
<dbReference type="DNASU" id="135114"/>
<dbReference type="Ensembl" id="ENST00000229633.7">
    <property type="protein sequence ID" value="ENSP00000229633.5"/>
    <property type="gene ID" value="ENSG00000111911.7"/>
</dbReference>
<dbReference type="GeneID" id="135114"/>
<dbReference type="KEGG" id="hsa:135114"/>
<dbReference type="MANE-Select" id="ENST00000229633.7">
    <property type="protein sequence ID" value="ENSP00000229633.5"/>
    <property type="RefSeq nucleotide sequence ID" value="NM_138571.5"/>
    <property type="RefSeq protein sequence ID" value="NP_612638.3"/>
</dbReference>
<dbReference type="UCSC" id="uc003qal.5">
    <property type="organism name" value="human"/>
</dbReference>
<dbReference type="AGR" id="HGNC:18468"/>
<dbReference type="CTD" id="135114"/>
<dbReference type="GeneCards" id="HINT3"/>
<dbReference type="HGNC" id="HGNC:18468">
    <property type="gene designation" value="HINT3"/>
</dbReference>
<dbReference type="HPA" id="ENSG00000111911">
    <property type="expression patterns" value="Tissue enhanced (skeletal)"/>
</dbReference>
<dbReference type="MIM" id="609998">
    <property type="type" value="gene"/>
</dbReference>
<dbReference type="neXtProt" id="NX_Q9NQE9"/>
<dbReference type="OpenTargets" id="ENSG00000111911"/>
<dbReference type="PharmGKB" id="PA29288"/>
<dbReference type="VEuPathDB" id="HostDB:ENSG00000111911"/>
<dbReference type="eggNOG" id="KOG4359">
    <property type="taxonomic scope" value="Eukaryota"/>
</dbReference>
<dbReference type="GeneTree" id="ENSGT00510000047616"/>
<dbReference type="HOGENOM" id="CLU_056776_4_2_1"/>
<dbReference type="InParanoid" id="Q9NQE9"/>
<dbReference type="OMA" id="EKKCIFC"/>
<dbReference type="OrthoDB" id="1915375at2759"/>
<dbReference type="PAN-GO" id="Q9NQE9">
    <property type="GO annotations" value="0 GO annotations based on evolutionary models"/>
</dbReference>
<dbReference type="PhylomeDB" id="Q9NQE9"/>
<dbReference type="TreeFam" id="TF353069"/>
<dbReference type="PathwayCommons" id="Q9NQE9"/>
<dbReference type="SABIO-RK" id="Q9NQE9"/>
<dbReference type="SignaLink" id="Q9NQE9"/>
<dbReference type="BioGRID-ORCS" id="135114">
    <property type="hits" value="15 hits in 1165 CRISPR screens"/>
</dbReference>
<dbReference type="ChiTaRS" id="HINT3">
    <property type="organism name" value="human"/>
</dbReference>
<dbReference type="GenomeRNAi" id="135114"/>
<dbReference type="Pharos" id="Q9NQE9">
    <property type="development level" value="Tdark"/>
</dbReference>
<dbReference type="PRO" id="PR:Q9NQE9"/>
<dbReference type="Proteomes" id="UP000005640">
    <property type="component" value="Chromosome 6"/>
</dbReference>
<dbReference type="RNAct" id="Q9NQE9">
    <property type="molecule type" value="protein"/>
</dbReference>
<dbReference type="Bgee" id="ENSG00000111911">
    <property type="expression patterns" value="Expressed in endothelial cell and 190 other cell types or tissues"/>
</dbReference>
<dbReference type="GO" id="GO:0005737">
    <property type="term" value="C:cytoplasm"/>
    <property type="evidence" value="ECO:0000315"/>
    <property type="project" value="UniProtKB"/>
</dbReference>
<dbReference type="GO" id="GO:0005739">
    <property type="term" value="C:mitochondrion"/>
    <property type="evidence" value="ECO:0006056"/>
    <property type="project" value="FlyBase"/>
</dbReference>
<dbReference type="GO" id="GO:0005634">
    <property type="term" value="C:nucleus"/>
    <property type="evidence" value="ECO:0000315"/>
    <property type="project" value="UniProtKB"/>
</dbReference>
<dbReference type="GO" id="GO:0043530">
    <property type="term" value="F:adenosine 5'-monophosphoramidase activity"/>
    <property type="evidence" value="ECO:0000314"/>
    <property type="project" value="UniProtKB"/>
</dbReference>
<dbReference type="GO" id="GO:0042802">
    <property type="term" value="F:identical protein binding"/>
    <property type="evidence" value="ECO:0000314"/>
    <property type="project" value="UniProtKB"/>
</dbReference>
<dbReference type="GO" id="GO:0000166">
    <property type="term" value="F:nucleotide binding"/>
    <property type="evidence" value="ECO:0007669"/>
    <property type="project" value="UniProtKB-KW"/>
</dbReference>
<dbReference type="CDD" id="cd01278">
    <property type="entry name" value="aprataxin_related"/>
    <property type="match status" value="1"/>
</dbReference>
<dbReference type="FunFam" id="3.30.428.10:FF:000020">
    <property type="entry name" value="Histidine triad nucleotide-binding protein 3"/>
    <property type="match status" value="1"/>
</dbReference>
<dbReference type="Gene3D" id="3.30.428.10">
    <property type="entry name" value="HIT-like"/>
    <property type="match status" value="1"/>
</dbReference>
<dbReference type="InterPro" id="IPR011146">
    <property type="entry name" value="HIT-like"/>
</dbReference>
<dbReference type="InterPro" id="IPR036265">
    <property type="entry name" value="HIT-like_sf"/>
</dbReference>
<dbReference type="PANTHER" id="PTHR12486:SF5">
    <property type="entry name" value="ADENOSINE 5'-MONOPHOSPHORAMIDASE HINT3"/>
    <property type="match status" value="1"/>
</dbReference>
<dbReference type="PANTHER" id="PTHR12486">
    <property type="entry name" value="APRATAXIN-RELATED"/>
    <property type="match status" value="1"/>
</dbReference>
<dbReference type="Pfam" id="PF11969">
    <property type="entry name" value="DcpS_C"/>
    <property type="match status" value="1"/>
</dbReference>
<dbReference type="SUPFAM" id="SSF54197">
    <property type="entry name" value="HIT-like"/>
    <property type="match status" value="1"/>
</dbReference>
<dbReference type="PROSITE" id="PS51084">
    <property type="entry name" value="HIT_2"/>
    <property type="match status" value="1"/>
</dbReference>
<comment type="function">
    <text evidence="6">Exhibits adenosine 5'-monophosphoramidase activity, hydrolyzing purine nucleotide phosphoramidates with a single phosphate group such as adenosine 5'monophosphoramidate (AMP-NH2) to yield AMP and NH2 (PubMed:17870088). Hydrolyzes lysyl-AMP (AMP-N-epsilon-(N-alpha-acetyl lysine methyl ester)) generated by lysine tRNA ligase (PubMed:17870088). Hydrolyzes 3-indolepropionic acyl-adenylate and fluorogenic purine nucleoside tryptamine phosphoramidates in vitro (PubMed:17870088).</text>
</comment>
<comment type="catalytic activity">
    <reaction evidence="6">
        <text>adenosine 5'-phosphoramidate + H2O = AMP + NH4(+)</text>
        <dbReference type="Rhea" id="RHEA:67916"/>
        <dbReference type="ChEBI" id="CHEBI:15377"/>
        <dbReference type="ChEBI" id="CHEBI:28938"/>
        <dbReference type="ChEBI" id="CHEBI:57890"/>
        <dbReference type="ChEBI" id="CHEBI:456215"/>
    </reaction>
</comment>
<comment type="biophysicochemical properties">
    <kinetics>
        <KM evidence="6">1.5 uM for indolepropinoic acyl-adenylate</KM>
        <KM evidence="6">22 uM for tryptamine adenine phosphoramidate monoester</KM>
        <KM evidence="6">29 uM for tryptamine guanine phosphoramidate monoester</KM>
        <KM evidence="6">32 uM for tryptamine hypoxanthine phosphoramidate monoester</KM>
        <KM evidence="6">121 uM for tryptamine uracil phosphoramidate monoester</KM>
        <KM evidence="6">181 uM for tryptamine cytosine phosphoramidate monoester</KM>
        <text>HINT3 prefers purine over pyrimidine-based substrates.</text>
    </kinetics>
</comment>
<comment type="subunit">
    <text evidence="2 6">Forms dimers to octamers and even larger oligomer (PubMed:17870088). Interacts with CALM1 (By similarity).</text>
</comment>
<comment type="subcellular location">
    <subcellularLocation>
        <location evidence="6">Cytoplasm</location>
    </subcellularLocation>
    <subcellularLocation>
        <location evidence="6">Nucleus</location>
    </subcellularLocation>
    <text>Localized as aggregates in the cytoplasm and the nucleus.</text>
</comment>
<comment type="similarity">
    <text evidence="8">Belongs to the HINT family.</text>
</comment>
<proteinExistence type="evidence at protein level"/>
<protein>
    <recommendedName>
        <fullName evidence="9">Adenosine 5'-monophosphoramidase HINT3</fullName>
        <ecNumber evidence="6">3.9.1.-</ecNumber>
    </recommendedName>
    <alternativeName>
        <fullName>Histidine triad nucleotide-binding protein 3</fullName>
        <shortName>HINT-3</shortName>
    </alternativeName>
</protein>
<accession>Q9NQE9</accession>
<accession>B3KQ91</accession>
<accession>Q8N0Y9</accession>
<sequence>MAEEQVNRSAGLAPDCEASATAETTVSSVGTCEAAGKSPEPKDYDSTCVFCRIAGRQDPGTELLHCENEDLICFKDIKPAATHHYLVVPKKHIGNCRTLRKDQVELVENMVTVGKTILERNNFTDFTNVRMGFHMPPFCSISHLHLHVLAPVDQLGFLSKLVYRVNSYWFITADHLIEKLRT</sequence>
<keyword id="KW-0007">Acetylation</keyword>
<keyword id="KW-0963">Cytoplasm</keyword>
<keyword id="KW-0378">Hydrolase</keyword>
<keyword id="KW-0547">Nucleotide-binding</keyword>
<keyword id="KW-0539">Nucleus</keyword>
<keyword id="KW-1267">Proteomics identification</keyword>
<keyword id="KW-1185">Reference proteome</keyword>